<evidence type="ECO:0000255" key="1">
    <source>
        <dbReference type="HAMAP-Rule" id="MF_01073"/>
    </source>
</evidence>
<proteinExistence type="inferred from homology"/>
<organism>
    <name type="scientific">Klebsiella pneumoniae (strain 342)</name>
    <dbReference type="NCBI Taxonomy" id="507522"/>
    <lineage>
        <taxon>Bacteria</taxon>
        <taxon>Pseudomonadati</taxon>
        <taxon>Pseudomonadota</taxon>
        <taxon>Gammaproteobacteria</taxon>
        <taxon>Enterobacterales</taxon>
        <taxon>Enterobacteriaceae</taxon>
        <taxon>Klebsiella/Raoultella group</taxon>
        <taxon>Klebsiella</taxon>
        <taxon>Klebsiella pneumoniae complex</taxon>
    </lineage>
</organism>
<name>MATP_KLEP3</name>
<protein>
    <recommendedName>
        <fullName evidence="1">Macrodomain Ter protein</fullName>
    </recommendedName>
</protein>
<keyword id="KW-0131">Cell cycle</keyword>
<keyword id="KW-0132">Cell division</keyword>
<keyword id="KW-0963">Cytoplasm</keyword>
<keyword id="KW-0238">DNA-binding</keyword>
<comment type="function">
    <text evidence="1">Required for spatial organization of the terminus region of the chromosome (Ter macrodomain) during the cell cycle. Prevents early segregation of duplicated Ter macrodomains during cell division. Binds specifically to matS, which is a 13 bp signature motif repeated within the Ter macrodomain.</text>
</comment>
<comment type="subunit">
    <text evidence="1">Homodimer.</text>
</comment>
<comment type="subcellular location">
    <subcellularLocation>
        <location evidence="1">Cytoplasm</location>
    </subcellularLocation>
</comment>
<comment type="similarity">
    <text evidence="1">Belongs to the MatP family.</text>
</comment>
<sequence>MKYQQLENLESGWKWKYLVKKHREGELITRYIEASAAQAAVDDLLTIENEPVLVHAWIEQHMNPALMNRMKQTIRARRKRHFNAEHQHTRKKSIDLEFVVWQRLAGLAQRRGKTLSETIVQLIEDAEHKEKYASKMSSLKHDLQELLGKE</sequence>
<gene>
    <name evidence="1" type="primary">matP</name>
    <name type="ordered locus">KPK_3584</name>
</gene>
<dbReference type="EMBL" id="CP000964">
    <property type="protein sequence ID" value="ACI10415.1"/>
    <property type="molecule type" value="Genomic_DNA"/>
</dbReference>
<dbReference type="SMR" id="B5XY49"/>
<dbReference type="KEGG" id="kpe:KPK_3584"/>
<dbReference type="HOGENOM" id="CLU_142157_0_0_6"/>
<dbReference type="Proteomes" id="UP000001734">
    <property type="component" value="Chromosome"/>
</dbReference>
<dbReference type="GO" id="GO:0005737">
    <property type="term" value="C:cytoplasm"/>
    <property type="evidence" value="ECO:0007669"/>
    <property type="project" value="UniProtKB-SubCell"/>
</dbReference>
<dbReference type="GO" id="GO:0043565">
    <property type="term" value="F:sequence-specific DNA binding"/>
    <property type="evidence" value="ECO:0007669"/>
    <property type="project" value="UniProtKB-UniRule"/>
</dbReference>
<dbReference type="GO" id="GO:0051301">
    <property type="term" value="P:cell division"/>
    <property type="evidence" value="ECO:0007669"/>
    <property type="project" value="UniProtKB-UniRule"/>
</dbReference>
<dbReference type="GO" id="GO:0006355">
    <property type="term" value="P:regulation of DNA-templated transcription"/>
    <property type="evidence" value="ECO:0007669"/>
    <property type="project" value="InterPro"/>
</dbReference>
<dbReference type="Gene3D" id="1.20.1270.380">
    <property type="entry name" value="MatP, N-terminal domain"/>
    <property type="match status" value="1"/>
</dbReference>
<dbReference type="Gene3D" id="1.10.1220.10">
    <property type="entry name" value="Met repressor-like"/>
    <property type="match status" value="1"/>
</dbReference>
<dbReference type="HAMAP" id="MF_01073">
    <property type="entry name" value="MatP"/>
    <property type="match status" value="1"/>
</dbReference>
<dbReference type="InterPro" id="IPR013321">
    <property type="entry name" value="Arc_rbn_hlx_hlx"/>
</dbReference>
<dbReference type="InterPro" id="IPR009390">
    <property type="entry name" value="MatP"/>
</dbReference>
<dbReference type="InterPro" id="IPR035375">
    <property type="entry name" value="MatP_C"/>
</dbReference>
<dbReference type="InterPro" id="IPR035087">
    <property type="entry name" value="MatP_N"/>
</dbReference>
<dbReference type="InterPro" id="IPR038339">
    <property type="entry name" value="MatP_N_sf"/>
</dbReference>
<dbReference type="NCBIfam" id="NF003471">
    <property type="entry name" value="PRK05097.1"/>
    <property type="match status" value="1"/>
</dbReference>
<dbReference type="Pfam" id="PF06303">
    <property type="entry name" value="MatP"/>
    <property type="match status" value="1"/>
</dbReference>
<dbReference type="Pfam" id="PF17414">
    <property type="entry name" value="MatP_C"/>
    <property type="match status" value="1"/>
</dbReference>
<accession>B5XY49</accession>
<feature type="chain" id="PRO_1000136672" description="Macrodomain Ter protein">
    <location>
        <begin position="1"/>
        <end position="150"/>
    </location>
</feature>
<reference key="1">
    <citation type="journal article" date="2008" name="PLoS Genet.">
        <title>Complete genome sequence of the N2-fixing broad host range endophyte Klebsiella pneumoniae 342 and virulence predictions verified in mice.</title>
        <authorList>
            <person name="Fouts D.E."/>
            <person name="Tyler H.L."/>
            <person name="DeBoy R.T."/>
            <person name="Daugherty S."/>
            <person name="Ren Q."/>
            <person name="Badger J.H."/>
            <person name="Durkin A.S."/>
            <person name="Huot H."/>
            <person name="Shrivastava S."/>
            <person name="Kothari S."/>
            <person name="Dodson R.J."/>
            <person name="Mohamoud Y."/>
            <person name="Khouri H."/>
            <person name="Roesch L.F.W."/>
            <person name="Krogfelt K.A."/>
            <person name="Struve C."/>
            <person name="Triplett E.W."/>
            <person name="Methe B.A."/>
        </authorList>
    </citation>
    <scope>NUCLEOTIDE SEQUENCE [LARGE SCALE GENOMIC DNA]</scope>
    <source>
        <strain>342</strain>
    </source>
</reference>